<dbReference type="RefSeq" id="NP_001421511.1">
    <property type="nucleotide sequence ID" value="NM_001434582.1"/>
</dbReference>
<dbReference type="RefSeq" id="XP_006255575.1">
    <property type="nucleotide sequence ID" value="XM_006255513.2"/>
</dbReference>
<dbReference type="SMR" id="A0A0G2JTY4"/>
<dbReference type="FunCoup" id="A0A0G2JTY4">
    <property type="interactions" value="2383"/>
</dbReference>
<dbReference type="STRING" id="10116.ENSRNOP00000068890"/>
<dbReference type="GlyGen" id="A0A0G2JTY4">
    <property type="glycosylation" value="1 site"/>
</dbReference>
<dbReference type="PhosphoSitePlus" id="A0A0G2JTY4"/>
<dbReference type="Ensembl" id="ENSRNOT00000087491.2">
    <property type="protein sequence ID" value="ENSRNOP00000068890.1"/>
    <property type="gene ID" value="ENSRNOG00000054264.2"/>
</dbReference>
<dbReference type="GeneID" id="361400"/>
<dbReference type="AGR" id="RGD:1308692"/>
<dbReference type="RGD" id="1308692">
    <property type="gene designation" value="Nfatc3"/>
</dbReference>
<dbReference type="GeneTree" id="ENSGT00940000156131"/>
<dbReference type="OMA" id="QPMPYQT"/>
<dbReference type="OrthoDB" id="5346094at2759"/>
<dbReference type="Reactome" id="R-RNO-2025928">
    <property type="pathway name" value="Calcineurin activates NFAT"/>
</dbReference>
<dbReference type="Reactome" id="R-RNO-2871809">
    <property type="pathway name" value="FCERI mediated Ca+2 mobilization"/>
</dbReference>
<dbReference type="Reactome" id="R-RNO-5607763">
    <property type="pathway name" value="CLEC7A (Dectin-1) induces NFAT activation"/>
</dbReference>
<dbReference type="Proteomes" id="UP000002494">
    <property type="component" value="Chromosome 19"/>
</dbReference>
<dbReference type="Bgee" id="ENSRNOG00000054264">
    <property type="expression patterns" value="Expressed in thymus and 19 other cell types or tissues"/>
</dbReference>
<dbReference type="ExpressionAtlas" id="A0A0G2JTY4">
    <property type="expression patterns" value="baseline and differential"/>
</dbReference>
<dbReference type="GO" id="GO:0005737">
    <property type="term" value="C:cytoplasm"/>
    <property type="evidence" value="ECO:0000314"/>
    <property type="project" value="UniProtKB"/>
</dbReference>
<dbReference type="GO" id="GO:0005829">
    <property type="term" value="C:cytosol"/>
    <property type="evidence" value="ECO:0000266"/>
    <property type="project" value="RGD"/>
</dbReference>
<dbReference type="GO" id="GO:0005634">
    <property type="term" value="C:nucleus"/>
    <property type="evidence" value="ECO:0000314"/>
    <property type="project" value="UniProtKB"/>
</dbReference>
<dbReference type="GO" id="GO:0005667">
    <property type="term" value="C:transcription regulator complex"/>
    <property type="evidence" value="ECO:0000318"/>
    <property type="project" value="GO_Central"/>
</dbReference>
<dbReference type="GO" id="GO:0003682">
    <property type="term" value="F:chromatin binding"/>
    <property type="evidence" value="ECO:0000266"/>
    <property type="project" value="RGD"/>
</dbReference>
<dbReference type="GO" id="GO:0003677">
    <property type="term" value="F:DNA binding"/>
    <property type="evidence" value="ECO:0000266"/>
    <property type="project" value="RGD"/>
</dbReference>
<dbReference type="GO" id="GO:0001228">
    <property type="term" value="F:DNA-binding transcription activator activity, RNA polymerase II-specific"/>
    <property type="evidence" value="ECO:0000266"/>
    <property type="project" value="RGD"/>
</dbReference>
<dbReference type="GO" id="GO:0003700">
    <property type="term" value="F:DNA-binding transcription factor activity"/>
    <property type="evidence" value="ECO:0000266"/>
    <property type="project" value="RGD"/>
</dbReference>
<dbReference type="GO" id="GO:0000981">
    <property type="term" value="F:DNA-binding transcription factor activity, RNA polymerase II-specific"/>
    <property type="evidence" value="ECO:0000318"/>
    <property type="project" value="GO_Central"/>
</dbReference>
<dbReference type="GO" id="GO:0001227">
    <property type="term" value="F:DNA-binding transcription repressor activity, RNA polymerase II-specific"/>
    <property type="evidence" value="ECO:0000266"/>
    <property type="project" value="RGD"/>
</dbReference>
<dbReference type="GO" id="GO:0000978">
    <property type="term" value="F:RNA polymerase II cis-regulatory region sequence-specific DNA binding"/>
    <property type="evidence" value="ECO:0000266"/>
    <property type="project" value="RGD"/>
</dbReference>
<dbReference type="GO" id="GO:0043565">
    <property type="term" value="F:sequence-specific DNA binding"/>
    <property type="evidence" value="ECO:0000266"/>
    <property type="project" value="RGD"/>
</dbReference>
<dbReference type="GO" id="GO:1990837">
    <property type="term" value="F:sequence-specific double-stranded DNA binding"/>
    <property type="evidence" value="ECO:0000266"/>
    <property type="project" value="RGD"/>
</dbReference>
<dbReference type="GO" id="GO:0000976">
    <property type="term" value="F:transcription cis-regulatory region binding"/>
    <property type="evidence" value="ECO:0000314"/>
    <property type="project" value="UniProtKB"/>
</dbReference>
<dbReference type="GO" id="GO:0001974">
    <property type="term" value="P:blood vessel remodeling"/>
    <property type="evidence" value="ECO:0000266"/>
    <property type="project" value="RGD"/>
</dbReference>
<dbReference type="GO" id="GO:0001569">
    <property type="term" value="P:branching involved in blood vessel morphogenesis"/>
    <property type="evidence" value="ECO:0000266"/>
    <property type="project" value="RGD"/>
</dbReference>
<dbReference type="GO" id="GO:0033173">
    <property type="term" value="P:calcineurin-NFAT signaling cascade"/>
    <property type="evidence" value="ECO:0000266"/>
    <property type="project" value="RGD"/>
</dbReference>
<dbReference type="GO" id="GO:0014898">
    <property type="term" value="P:cardiac muscle hypertrophy in response to stress"/>
    <property type="evidence" value="ECO:0000266"/>
    <property type="project" value="RGD"/>
</dbReference>
<dbReference type="GO" id="GO:0045333">
    <property type="term" value="P:cellular respiration"/>
    <property type="evidence" value="ECO:0000266"/>
    <property type="project" value="RGD"/>
</dbReference>
<dbReference type="GO" id="GO:0071277">
    <property type="term" value="P:cellular response to calcium ion"/>
    <property type="evidence" value="ECO:0000266"/>
    <property type="project" value="RGD"/>
</dbReference>
<dbReference type="GO" id="GO:0071285">
    <property type="term" value="P:cellular response to lithium ion"/>
    <property type="evidence" value="ECO:0000266"/>
    <property type="project" value="RGD"/>
</dbReference>
<dbReference type="GO" id="GO:1904157">
    <property type="term" value="P:DN4 thymocyte differentiation"/>
    <property type="evidence" value="ECO:0000250"/>
    <property type="project" value="UniProtKB"/>
</dbReference>
<dbReference type="GO" id="GO:0007507">
    <property type="term" value="P:heart development"/>
    <property type="evidence" value="ECO:0000266"/>
    <property type="project" value="RGD"/>
</dbReference>
<dbReference type="GO" id="GO:0014904">
    <property type="term" value="P:myotube cell development"/>
    <property type="evidence" value="ECO:0000266"/>
    <property type="project" value="RGD"/>
</dbReference>
<dbReference type="GO" id="GO:0014902">
    <property type="term" value="P:myotube differentiation"/>
    <property type="evidence" value="ECO:0000266"/>
    <property type="project" value="RGD"/>
</dbReference>
<dbReference type="GO" id="GO:1902894">
    <property type="term" value="P:negative regulation of miRNA transcription"/>
    <property type="evidence" value="ECO:0000266"/>
    <property type="project" value="RGD"/>
</dbReference>
<dbReference type="GO" id="GO:1905064">
    <property type="term" value="P:negative regulation of vascular associated smooth muscle cell differentiation"/>
    <property type="evidence" value="ECO:0000266"/>
    <property type="project" value="RGD"/>
</dbReference>
<dbReference type="GO" id="GO:0043065">
    <property type="term" value="P:positive regulation of apoptotic process"/>
    <property type="evidence" value="ECO:0000315"/>
    <property type="project" value="UniProtKB"/>
</dbReference>
<dbReference type="GO" id="GO:1905653">
    <property type="term" value="P:positive regulation of artery morphogenesis"/>
    <property type="evidence" value="ECO:0000250"/>
    <property type="project" value="UniProtKB"/>
</dbReference>
<dbReference type="GO" id="GO:0010613">
    <property type="term" value="P:positive regulation of cardiac muscle hypertrophy"/>
    <property type="evidence" value="ECO:0000315"/>
    <property type="project" value="UniProtKB"/>
</dbReference>
<dbReference type="GO" id="GO:0045893">
    <property type="term" value="P:positive regulation of DNA-templated transcription"/>
    <property type="evidence" value="ECO:0000315"/>
    <property type="project" value="RGD"/>
</dbReference>
<dbReference type="GO" id="GO:0045429">
    <property type="term" value="P:positive regulation of nitric oxide biosynthetic process"/>
    <property type="evidence" value="ECO:0000250"/>
    <property type="project" value="UniProtKB"/>
</dbReference>
<dbReference type="GO" id="GO:0045944">
    <property type="term" value="P:positive regulation of transcription by RNA polymerase II"/>
    <property type="evidence" value="ECO:0000314"/>
    <property type="project" value="UniProtKB"/>
</dbReference>
<dbReference type="GO" id="GO:0045059">
    <property type="term" value="P:positive thymic T cell selection"/>
    <property type="evidence" value="ECO:0000250"/>
    <property type="project" value="UniProtKB"/>
</dbReference>
<dbReference type="GO" id="GO:0006606">
    <property type="term" value="P:protein import into nucleus"/>
    <property type="evidence" value="ECO:0000314"/>
    <property type="project" value="RGD"/>
</dbReference>
<dbReference type="GO" id="GO:0006355">
    <property type="term" value="P:regulation of DNA-templated transcription"/>
    <property type="evidence" value="ECO:0000266"/>
    <property type="project" value="RGD"/>
</dbReference>
<dbReference type="GO" id="GO:2001256">
    <property type="term" value="P:regulation of store-operated calcium entry"/>
    <property type="evidence" value="ECO:0000266"/>
    <property type="project" value="RGD"/>
</dbReference>
<dbReference type="GO" id="GO:0001666">
    <property type="term" value="P:response to hypoxia"/>
    <property type="evidence" value="ECO:0000266"/>
    <property type="project" value="RGD"/>
</dbReference>
<dbReference type="GO" id="GO:0048741">
    <property type="term" value="P:skeletal muscle fiber development"/>
    <property type="evidence" value="ECO:0000266"/>
    <property type="project" value="RGD"/>
</dbReference>
<dbReference type="GO" id="GO:0030217">
    <property type="term" value="P:T cell differentiation"/>
    <property type="evidence" value="ECO:0000266"/>
    <property type="project" value="RGD"/>
</dbReference>
<dbReference type="GO" id="GO:0048538">
    <property type="term" value="P:thymus development"/>
    <property type="evidence" value="ECO:0000266"/>
    <property type="project" value="RGD"/>
</dbReference>
<dbReference type="GO" id="GO:0006366">
    <property type="term" value="P:transcription by RNA polymerase II"/>
    <property type="evidence" value="ECO:0000266"/>
    <property type="project" value="RGD"/>
</dbReference>
<dbReference type="GO" id="GO:0097084">
    <property type="term" value="P:vascular associated smooth muscle cell development"/>
    <property type="evidence" value="ECO:0000266"/>
    <property type="project" value="RGD"/>
</dbReference>
<dbReference type="GO" id="GO:0035886">
    <property type="term" value="P:vascular associated smooth muscle cell differentiation"/>
    <property type="evidence" value="ECO:0000266"/>
    <property type="project" value="RGD"/>
</dbReference>
<dbReference type="CDD" id="cd01178">
    <property type="entry name" value="IPT_NFAT"/>
    <property type="match status" value="1"/>
</dbReference>
<dbReference type="CDD" id="cd07881">
    <property type="entry name" value="RHD-n_NFAT"/>
    <property type="match status" value="1"/>
</dbReference>
<dbReference type="FunFam" id="2.60.40.10:FF:000040">
    <property type="entry name" value="Nuclear factor of activated T-cells, cytoplasmic, calcineurin-dependent 2"/>
    <property type="match status" value="1"/>
</dbReference>
<dbReference type="FunFam" id="2.60.40.340:FF:000001">
    <property type="entry name" value="Nuclear factor of activated T-cells, cytoplasmic, calcineurin-dependent 2"/>
    <property type="match status" value="1"/>
</dbReference>
<dbReference type="Gene3D" id="2.60.40.10">
    <property type="entry name" value="Immunoglobulins"/>
    <property type="match status" value="1"/>
</dbReference>
<dbReference type="Gene3D" id="2.60.40.340">
    <property type="entry name" value="Rel homology domain (RHD), DNA-binding domain"/>
    <property type="match status" value="1"/>
</dbReference>
<dbReference type="InterPro" id="IPR013783">
    <property type="entry name" value="Ig-like_fold"/>
</dbReference>
<dbReference type="InterPro" id="IPR014756">
    <property type="entry name" value="Ig_E-set"/>
</dbReference>
<dbReference type="InterPro" id="IPR002909">
    <property type="entry name" value="IPT_dom"/>
</dbReference>
<dbReference type="InterPro" id="IPR008366">
    <property type="entry name" value="NFAT"/>
</dbReference>
<dbReference type="InterPro" id="IPR008967">
    <property type="entry name" value="p53-like_TF_DNA-bd_sf"/>
</dbReference>
<dbReference type="InterPro" id="IPR032397">
    <property type="entry name" value="RHD_dimer"/>
</dbReference>
<dbReference type="InterPro" id="IPR011539">
    <property type="entry name" value="RHD_DNA_bind_dom"/>
</dbReference>
<dbReference type="InterPro" id="IPR037059">
    <property type="entry name" value="RHD_DNA_bind_dom_sf"/>
</dbReference>
<dbReference type="PANTHER" id="PTHR12533">
    <property type="entry name" value="NFAT"/>
    <property type="match status" value="1"/>
</dbReference>
<dbReference type="PANTHER" id="PTHR12533:SF6">
    <property type="entry name" value="NUCLEAR FACTOR OF ACTIVATED T-CELLS, CYTOPLASMIC 3"/>
    <property type="match status" value="1"/>
</dbReference>
<dbReference type="Pfam" id="PF16179">
    <property type="entry name" value="RHD_dimer"/>
    <property type="match status" value="1"/>
</dbReference>
<dbReference type="Pfam" id="PF00554">
    <property type="entry name" value="RHD_DNA_bind"/>
    <property type="match status" value="1"/>
</dbReference>
<dbReference type="PRINTS" id="PR01789">
    <property type="entry name" value="NUCFACTORATC"/>
</dbReference>
<dbReference type="SMART" id="SM00429">
    <property type="entry name" value="IPT"/>
    <property type="match status" value="1"/>
</dbReference>
<dbReference type="SUPFAM" id="SSF81296">
    <property type="entry name" value="E set domains"/>
    <property type="match status" value="1"/>
</dbReference>
<dbReference type="SUPFAM" id="SSF49417">
    <property type="entry name" value="p53-like transcription factors"/>
    <property type="match status" value="1"/>
</dbReference>
<dbReference type="PROSITE" id="PS50254">
    <property type="entry name" value="REL_2"/>
    <property type="match status" value="1"/>
</dbReference>
<proteinExistence type="evidence at protein level"/>
<organism evidence="9">
    <name type="scientific">Rattus norvegicus</name>
    <name type="common">Rat</name>
    <dbReference type="NCBI Taxonomy" id="10116"/>
    <lineage>
        <taxon>Eukaryota</taxon>
        <taxon>Metazoa</taxon>
        <taxon>Chordata</taxon>
        <taxon>Craniata</taxon>
        <taxon>Vertebrata</taxon>
        <taxon>Euteleostomi</taxon>
        <taxon>Mammalia</taxon>
        <taxon>Eutheria</taxon>
        <taxon>Euarchontoglires</taxon>
        <taxon>Glires</taxon>
        <taxon>Rodentia</taxon>
        <taxon>Myomorpha</taxon>
        <taxon>Muroidea</taxon>
        <taxon>Muridae</taxon>
        <taxon>Murinae</taxon>
        <taxon>Rattus</taxon>
    </lineage>
</organism>
<sequence>MTTANCGAHDELDFKLVFGEDGAPTPVSQVSRPADLEPDDCASIYIFNVDPPPSTLNSSLGLPHHGLLQSHSSVLSPSFQLQGFKNYEGTDDISESKYSSLSGPKPFECPSIQITSISPNCHQETDAHEDDLHVNDPEREYLERPSRDHLYLPLEPSYRESSLSPSPASSVSSRSWFSDASSCESLSHIYDDVDSELNEAAARFTLGSPLTSPGGSPGGCPGEESWHQQYGPGHSLSPRQSPCHSPRSSITDENWLSPRPASGPSSRPTSPCGKRRHSSAEVCYAGSLSPHHSPVPSPGHSPRGSVTEDTWLTAPVHTGSGLSPAPFPFQYCVETDIPLKTRKTSDDQAAILPGKLEVCSDDQGSLSPSRETSVDDGLGSQYPLKKDSSGDQFLSVPSPFTWSKPKPGHTPIFRTSSLPPLDWPLPTHFGQCELKIEVQPKTHHRAHYETEGSRGAVKASTGGHPVVKLLGYSEKPINLQMFIGTADDRYLRPHAFYQVHRITGKTVATASQEIIIASTKVLEIPLLPENNMSASIDCAGILKLRNSDIELRKGETDIGRKNTRVRLVFRVHIPQPSGKVLSLQIASIPVECSQRSAQELPHIEKYSINSCSVNGGHEMIVTGSNFLPESKIIFLEKGQDGRPHWEAEGKIIREKCQGGHIVLEVPPYHNPAVTSAVQVHFYLCNGKRKKSQSQRFTYTPVLMKQEQREDTDLSSVPSLPVPHSAQTQRPSSDTGHPHDSALSAPRSLICPVQPAYASMITSTHLPQLQCRDEGAGKEQHIIPSSVMHQPFQVTPTSPMGSSYQSIQTNMYNGPTCLPMNPASSQEFDPVLFQQDAALSNLVNLGCQPLSPIPFHSSNSDATGHLLAHSPHSVQTPPHLQSMGYHCSSAGQRSLSSPVAAQVTGQPSSHLQPITYCPSHPGSATAASPAASHALSSSPISGPPSPQLQSMPYQSPSSGTASSPSPVTRMHSGQHSTQAQSTGQGGLSVPSSLVCHSLCDPASFPPGGAAVSIKPEPEDQEPNFATIGLQDITLDDVNEIIGRDMSQITVSQGPEVIRDAPLPGPESPDVMSSNSAQ</sequence>
<name>NFAC3_RAT</name>
<reference evidence="9" key="1">
    <citation type="journal article" date="2004" name="Nature">
        <title>Genome sequence of the Brown Norway rat yields insights into mammalian evolution.</title>
        <authorList>
            <person name="Gibbs R.A."/>
            <person name="Weinstock G.M."/>
            <person name="Metzker M.L."/>
            <person name="Muzny D.M."/>
            <person name="Sodergren E.J."/>
            <person name="Scherer S."/>
            <person name="Scott G."/>
            <person name="Steffen D."/>
            <person name="Worley K.C."/>
            <person name="Burch P.E."/>
            <person name="Okwuonu G."/>
            <person name="Hines S."/>
            <person name="Lewis L."/>
            <person name="Deramo C."/>
            <person name="Delgado O."/>
            <person name="Dugan-Rocha S."/>
            <person name="Miner G."/>
            <person name="Morgan M."/>
            <person name="Hawes A."/>
            <person name="Gill R."/>
            <person name="Holt R.A."/>
            <person name="Adams M.D."/>
            <person name="Amanatides P.G."/>
            <person name="Baden-Tillson H."/>
            <person name="Barnstead M."/>
            <person name="Chin S."/>
            <person name="Evans C.A."/>
            <person name="Ferriera S."/>
            <person name="Fosler C."/>
            <person name="Glodek A."/>
            <person name="Gu Z."/>
            <person name="Jennings D."/>
            <person name="Kraft C.L."/>
            <person name="Nguyen T."/>
            <person name="Pfannkoch C.M."/>
            <person name="Sitter C."/>
            <person name="Sutton G.G."/>
            <person name="Venter J.C."/>
            <person name="Woodage T."/>
            <person name="Smith D."/>
            <person name="Lee H.-M."/>
            <person name="Gustafson E."/>
            <person name="Cahill P."/>
            <person name="Kana A."/>
            <person name="Doucette-Stamm L."/>
            <person name="Weinstock K."/>
            <person name="Fechtel K."/>
            <person name="Weiss R.B."/>
            <person name="Dunn D.M."/>
            <person name="Green E.D."/>
            <person name="Blakesley R.W."/>
            <person name="Bouffard G.G."/>
            <person name="De Jong P.J."/>
            <person name="Osoegawa K."/>
            <person name="Zhu B."/>
            <person name="Marra M."/>
            <person name="Schein J."/>
            <person name="Bosdet I."/>
            <person name="Fjell C."/>
            <person name="Jones S."/>
            <person name="Krzywinski M."/>
            <person name="Mathewson C."/>
            <person name="Siddiqui A."/>
            <person name="Wye N."/>
            <person name="McPherson J."/>
            <person name="Zhao S."/>
            <person name="Fraser C.M."/>
            <person name="Shetty J."/>
            <person name="Shatsman S."/>
            <person name="Geer K."/>
            <person name="Chen Y."/>
            <person name="Abramzon S."/>
            <person name="Nierman W.C."/>
            <person name="Havlak P.H."/>
            <person name="Chen R."/>
            <person name="Durbin K.J."/>
            <person name="Egan A."/>
            <person name="Ren Y."/>
            <person name="Song X.-Z."/>
            <person name="Li B."/>
            <person name="Liu Y."/>
            <person name="Qin X."/>
            <person name="Cawley S."/>
            <person name="Cooney A.J."/>
            <person name="D'Souza L.M."/>
            <person name="Martin K."/>
            <person name="Wu J.Q."/>
            <person name="Gonzalez-Garay M.L."/>
            <person name="Jackson A.R."/>
            <person name="Kalafus K.J."/>
            <person name="McLeod M.P."/>
            <person name="Milosavljevic A."/>
            <person name="Virk D."/>
            <person name="Volkov A."/>
            <person name="Wheeler D.A."/>
            <person name="Zhang Z."/>
            <person name="Bailey J.A."/>
            <person name="Eichler E.E."/>
            <person name="Tuzun E."/>
            <person name="Birney E."/>
            <person name="Mongin E."/>
            <person name="Ureta-Vidal A."/>
            <person name="Woodwark C."/>
            <person name="Zdobnov E."/>
            <person name="Bork P."/>
            <person name="Suyama M."/>
            <person name="Torrents D."/>
            <person name="Alexandersson M."/>
            <person name="Trask B.J."/>
            <person name="Young J.M."/>
            <person name="Huang H."/>
            <person name="Wang H."/>
            <person name="Xing H."/>
            <person name="Daniels S."/>
            <person name="Gietzen D."/>
            <person name="Schmidt J."/>
            <person name="Stevens K."/>
            <person name="Vitt U."/>
            <person name="Wingrove J."/>
            <person name="Camara F."/>
            <person name="Mar Alba M."/>
            <person name="Abril J.F."/>
            <person name="Guigo R."/>
            <person name="Smit A."/>
            <person name="Dubchak I."/>
            <person name="Rubin E.M."/>
            <person name="Couronne O."/>
            <person name="Poliakov A."/>
            <person name="Huebner N."/>
            <person name="Ganten D."/>
            <person name="Goesele C."/>
            <person name="Hummel O."/>
            <person name="Kreitler T."/>
            <person name="Lee Y.-A."/>
            <person name="Monti J."/>
            <person name="Schulz H."/>
            <person name="Zimdahl H."/>
            <person name="Himmelbauer H."/>
            <person name="Lehrach H."/>
            <person name="Jacob H.J."/>
            <person name="Bromberg S."/>
            <person name="Gullings-Handley J."/>
            <person name="Jensen-Seaman M.I."/>
            <person name="Kwitek A.E."/>
            <person name="Lazar J."/>
            <person name="Pasko D."/>
            <person name="Tonellato P.J."/>
            <person name="Twigger S."/>
            <person name="Ponting C.P."/>
            <person name="Duarte J.M."/>
            <person name="Rice S."/>
            <person name="Goodstadt L."/>
            <person name="Beatson S.A."/>
            <person name="Emes R.D."/>
            <person name="Winter E.E."/>
            <person name="Webber C."/>
            <person name="Brandt P."/>
            <person name="Nyakatura G."/>
            <person name="Adetobi M."/>
            <person name="Chiaromonte F."/>
            <person name="Elnitski L."/>
            <person name="Eswara P."/>
            <person name="Hardison R.C."/>
            <person name="Hou M."/>
            <person name="Kolbe D."/>
            <person name="Makova K."/>
            <person name="Miller W."/>
            <person name="Nekrutenko A."/>
            <person name="Riemer C."/>
            <person name="Schwartz S."/>
            <person name="Taylor J."/>
            <person name="Yang S."/>
            <person name="Zhang Y."/>
            <person name="Lindpaintner K."/>
            <person name="Andrews T.D."/>
            <person name="Caccamo M."/>
            <person name="Clamp M."/>
            <person name="Clarke L."/>
            <person name="Curwen V."/>
            <person name="Durbin R.M."/>
            <person name="Eyras E."/>
            <person name="Searle S.M."/>
            <person name="Cooper G.M."/>
            <person name="Batzoglou S."/>
            <person name="Brudno M."/>
            <person name="Sidow A."/>
            <person name="Stone E.A."/>
            <person name="Payseur B.A."/>
            <person name="Bourque G."/>
            <person name="Lopez-Otin C."/>
            <person name="Puente X.S."/>
            <person name="Chakrabarti K."/>
            <person name="Chatterji S."/>
            <person name="Dewey C."/>
            <person name="Pachter L."/>
            <person name="Bray N."/>
            <person name="Yap V.B."/>
            <person name="Caspi A."/>
            <person name="Tesler G."/>
            <person name="Pevzner P.A."/>
            <person name="Haussler D."/>
            <person name="Roskin K.M."/>
            <person name="Baertsch R."/>
            <person name="Clawson H."/>
            <person name="Furey T.S."/>
            <person name="Hinrichs A.S."/>
            <person name="Karolchik D."/>
            <person name="Kent W.J."/>
            <person name="Rosenbloom K.R."/>
            <person name="Trumbower H."/>
            <person name="Weirauch M."/>
            <person name="Cooper D.N."/>
            <person name="Stenson P.D."/>
            <person name="Ma B."/>
            <person name="Brent M."/>
            <person name="Arumugam M."/>
            <person name="Shteynberg D."/>
            <person name="Copley R.R."/>
            <person name="Taylor M.S."/>
            <person name="Riethman H."/>
            <person name="Mudunuri U."/>
            <person name="Peterson J."/>
            <person name="Guyer M."/>
            <person name="Felsenfeld A."/>
            <person name="Old S."/>
            <person name="Mockrin S."/>
            <person name="Collins F.S."/>
        </authorList>
    </citation>
    <scope>NUCLEOTIDE SEQUENCE [LARGE SCALE GENOMIC DNA]</scope>
    <source>
        <strain evidence="9">Brown Norway</strain>
    </source>
</reference>
<reference evidence="11" key="2">
    <citation type="journal article" date="2012" name="Nat. Commun.">
        <title>Quantitative maps of protein phosphorylation sites across 14 different rat organs and tissues.</title>
        <authorList>
            <person name="Lundby A."/>
            <person name="Secher A."/>
            <person name="Lage K."/>
            <person name="Nordsborg N.B."/>
            <person name="Dmytriyev A."/>
            <person name="Lundby C."/>
            <person name="Olsen J.V."/>
        </authorList>
    </citation>
    <scope>IDENTIFICATION BY MASS SPECTROMETRY [LARGE SCALE ANALYSIS]</scope>
</reference>
<reference evidence="8" key="3">
    <citation type="journal article" date="2010" name="J. Cell. Mol. Med.">
        <title>Cross-talk between calcineurin/NFAT and Jak/STAT signalling induces cardioprotective alphaB-crystallin gene expression in response to hypertrophic stimuli.</title>
        <authorList>
            <person name="Manukyan I."/>
            <person name="Galatioto J."/>
            <person name="Mascareno E."/>
            <person name="Bhaduri S."/>
            <person name="Siddiqui M.A."/>
        </authorList>
    </citation>
    <scope>FUNCTION</scope>
    <scope>SUBCELLULAR LOCATION</scope>
    <scope>TISSUE SPECIFICITY</scope>
</reference>
<reference evidence="8" key="4">
    <citation type="journal article" date="2019" name="J. Cell. Physiol.">
        <title>CHIP attenuates lipopolysaccharide-induced cardiac hypertrophy and apoptosis by promoting NFATc3 proteasomal degradation.</title>
        <authorList>
            <person name="Chao C.N."/>
            <person name="Lai C.H."/>
            <person name="Badrealam K.F."/>
            <person name="Lo J.F."/>
            <person name="Shen C.Y."/>
            <person name="Chen C.H."/>
            <person name="Chen R.J."/>
            <person name="Viswanadha V.P."/>
            <person name="Kuo W.W."/>
            <person name="Huang C.Y."/>
        </authorList>
    </citation>
    <scope>FUNCTION</scope>
    <scope>INTERACTION WITH STUB1</scope>
    <scope>SUBCELLULAR LOCATION</scope>
    <scope>INDUCTION BY LIPOPOLYSACCHARIDES</scope>
</reference>
<protein>
    <recommendedName>
        <fullName evidence="8">Nuclear factor of activated T-cells, cytoplasmic 3</fullName>
        <shortName evidence="2">NFATc3</shortName>
    </recommendedName>
    <alternativeName>
        <fullName evidence="2">NFATx</fullName>
    </alternativeName>
    <alternativeName>
        <fullName evidence="10">T-cell transcription factor NFAT4</fullName>
    </alternativeName>
</protein>
<gene>
    <name evidence="10" type="primary">Nfatc3</name>
    <name evidence="10" type="synonym">Nfat4</name>
</gene>
<feature type="initiator methionine" description="Removed" evidence="3">
    <location>
        <position position="1"/>
    </location>
</feature>
<feature type="chain" id="PRO_0000460028" description="Nuclear factor of activated T-cells, cytoplasmic 3">
    <location>
        <begin position="2"/>
        <end position="1076"/>
    </location>
</feature>
<feature type="repeat" description="1" evidence="2">
    <location>
        <begin position="208"/>
        <end position="224"/>
    </location>
</feature>
<feature type="repeat" description="2" evidence="2">
    <location>
        <begin position="237"/>
        <end position="253"/>
    </location>
</feature>
<feature type="repeat" description="3" evidence="2">
    <location>
        <begin position="293"/>
        <end position="309"/>
    </location>
</feature>
<feature type="domain" description="RHD" evidence="4">
    <location>
        <begin position="416"/>
        <end position="597"/>
    </location>
</feature>
<feature type="DNA-binding region" evidence="1">
    <location>
        <begin position="445"/>
        <end position="452"/>
    </location>
</feature>
<feature type="region of interest" description="Calcineurin-binding" evidence="3">
    <location>
        <begin position="110"/>
        <end position="115"/>
    </location>
</feature>
<feature type="region of interest" description="Disordered" evidence="5">
    <location>
        <begin position="206"/>
        <end position="307"/>
    </location>
</feature>
<feature type="region of interest" description="3 X SP repeats" evidence="2">
    <location>
        <begin position="208"/>
        <end position="309"/>
    </location>
</feature>
<feature type="region of interest" description="Disordered" evidence="5">
    <location>
        <begin position="359"/>
        <end position="390"/>
    </location>
</feature>
<feature type="region of interest" description="Disordered" evidence="5">
    <location>
        <begin position="700"/>
        <end position="744"/>
    </location>
</feature>
<feature type="region of interest" description="Disordered" evidence="5">
    <location>
        <begin position="863"/>
        <end position="987"/>
    </location>
</feature>
<feature type="region of interest" description="Disordered" evidence="5">
    <location>
        <begin position="1049"/>
        <end position="1076"/>
    </location>
</feature>
<feature type="short sequence motif" description="Nuclear localization signal" evidence="3">
    <location>
        <begin position="274"/>
        <end position="276"/>
    </location>
</feature>
<feature type="short sequence motif" description="Nuclear localization signal" evidence="2">
    <location>
        <begin position="687"/>
        <end position="689"/>
    </location>
</feature>
<feature type="short sequence motif" description="Nuclear export signal" evidence="2">
    <location>
        <begin position="1032"/>
        <end position="1041"/>
    </location>
</feature>
<feature type="compositionally biased region" description="Polar residues" evidence="5">
    <location>
        <begin position="237"/>
        <end position="254"/>
    </location>
</feature>
<feature type="compositionally biased region" description="Low complexity" evidence="5">
    <location>
        <begin position="257"/>
        <end position="271"/>
    </location>
</feature>
<feature type="compositionally biased region" description="Polar residues" evidence="5">
    <location>
        <begin position="362"/>
        <end position="371"/>
    </location>
</feature>
<feature type="compositionally biased region" description="Low complexity" evidence="5">
    <location>
        <begin position="713"/>
        <end position="722"/>
    </location>
</feature>
<feature type="compositionally biased region" description="Polar residues" evidence="5">
    <location>
        <begin position="724"/>
        <end position="734"/>
    </location>
</feature>
<feature type="compositionally biased region" description="Polar residues" evidence="5">
    <location>
        <begin position="888"/>
        <end position="911"/>
    </location>
</feature>
<feature type="compositionally biased region" description="Low complexity" evidence="5">
    <location>
        <begin position="917"/>
        <end position="939"/>
    </location>
</feature>
<feature type="compositionally biased region" description="Low complexity" evidence="5">
    <location>
        <begin position="946"/>
        <end position="965"/>
    </location>
</feature>
<feature type="compositionally biased region" description="Polar residues" evidence="5">
    <location>
        <begin position="970"/>
        <end position="981"/>
    </location>
</feature>
<feature type="modified residue" description="N-acetylthreonine" evidence="3">
    <location>
        <position position="2"/>
    </location>
</feature>
<feature type="modified residue" description="Phosphoserine" evidence="2">
    <location>
        <position position="345"/>
    </location>
</feature>
<feature type="modified residue" description="Phosphoserine" evidence="3">
    <location>
        <position position="373"/>
    </location>
</feature>
<feature type="modified residue" description="Phosphoserine" evidence="3">
    <location>
        <position position="1066"/>
    </location>
</feature>
<keyword id="KW-0007">Acetylation</keyword>
<keyword id="KW-0963">Cytoplasm</keyword>
<keyword id="KW-0238">DNA-binding</keyword>
<keyword id="KW-0539">Nucleus</keyword>
<keyword id="KW-0597">Phosphoprotein</keyword>
<keyword id="KW-1185">Reference proteome</keyword>
<keyword id="KW-0677">Repeat</keyword>
<keyword id="KW-0804">Transcription</keyword>
<keyword id="KW-0805">Transcription regulation</keyword>
<keyword id="KW-0832">Ubl conjugation</keyword>
<comment type="function">
    <text evidence="2 3 6 7">Acts as a regulator of transcriptional activation. Binds to the TNFSF11/RANKL promoter region and promotes TNFSF11 transcription (By similarity). Binding to the TNFSF11 promoter region is increased by high levels of Ca(2+) which induce NFATC3 expression and may lead to regulation of TNFSF11 expression in osteoblasts (By similarity). Plays a role in promoting mesenteric arterial wall remodeling in response to the intermittent hypoxia-induced increase in EDN1 and ROCK signaling (By similarity). As a result NFATC3 colocalizes with F-actin filaments, translocates to the nucleus and promotes transcription of the smooth muscle hypertrophy and differentiation marker ACTA2 (By similarity). Promotes lipopolysaccharide-induced apoptosis and hypertrophy in cardiomyocytes (PubMed:30980393). Following JAK/STAT signaling activation and as part of a complex with NFATC4 and STAT3, binds to the alpha-beta E4 promoter region of CRYAB and activates transcription in cardiomyocytes (PubMed:19538478). In conjunction with NFATC4, involved in embryonic heart development via maintenance of cardiomyocyte survival, proliferation and differentiation (By similarity). Plays a role in the inducible expression of cytokine genes in T-cells, especially in the induction of the IL-2 (By similarity). Required for thymocyte maturation during DN3 to DN4 transition and during positive selection (By similarity). Positively regulates macrophage-derived polymicrobial clearance, via binding to the promoter region and promoting transcription of NOS2 resulting in subsequent generation of nitric oxide (By similarity). Involved in Ca(2+)-mediated transcriptional responses upon Ca(2+) influx via ORAI1 CRAC channels.</text>
</comment>
<comment type="subunit">
    <text evidence="2 3 7">NFATC proteins bind to DNA as monomers (By similarity). Member of the multicomponent NFATC transcription complex that consists of at least two components, a pre-existing cytoplasmic component NFATC2 and an inducible nuclear component NFATC1 (By similarity). Other members such as NFATC4, or members of the activating protein-1 family, MAF, GATA4 and Cbp/p300 can also bind the complex (By similarity). Component of a promoter-binding complex composed of STAT3, NFATC3 and NFATC4; complex formation is enhanced by calcineurin (By similarity). Interacts with TRIM17; this interaction prevents NFATC3 nuclear localization (By similarity). Interacts with and ubiquitinated by STUB1/CHIP; HSPA1A/HSP70 is required as a co-chaperone (PubMed:30980393).</text>
</comment>
<comment type="subcellular location">
    <subcellularLocation>
        <location evidence="6 7">Cytoplasm</location>
    </subcellularLocation>
    <subcellularLocation>
        <location evidence="6 7">Nucleus</location>
    </subcellularLocation>
    <text evidence="2 6">The subcellular localization of NFATC plays a key role in the regulation of gene transcription (By similarity). Rapid nuclear exit of NFATC is thought to be one mechanism by which cells distinguish between sustained and transient calcium signals (By similarity). Cytoplasmic when phosphorylated and nuclear after activation, that is controlled by calcineurin-mediated dephosphorylation (By similarity). Translocation to the nucleus is increased in the presence of calcium in pre-osteoblasts (By similarity). Translocates to the nucleus in the presence of EDN1 following colocalization with F-actin filaments, translocation is ROCK-dependent (PubMed:19538478). Translocates to the nucleus in response to lipopolysaccharide treatment of macrophages (By similarity).</text>
</comment>
<comment type="tissue specificity">
    <text evidence="6">Expressed in cardiomyocytes (at protein level).</text>
</comment>
<comment type="induction">
    <text evidence="7">Induced by lipopolysaccharides.</text>
</comment>
<comment type="domain">
    <text evidence="3">Rel Similarity Domain (RSD) allows DNA-binding and cooperative interactions with AP1 factors.</text>
</comment>
<comment type="PTM">
    <text evidence="3">Phosphorylated by NFATC-kinase; dephosphorylated by calcineurin.</text>
</comment>
<comment type="PTM">
    <text evidence="3">Ubiquitinated by STUB1/CHIP, leading to proteasomal degradation.</text>
</comment>
<evidence type="ECO:0000250" key="1">
    <source>
        <dbReference type="UniProtKB" id="O95644"/>
    </source>
</evidence>
<evidence type="ECO:0000250" key="2">
    <source>
        <dbReference type="UniProtKB" id="P97305"/>
    </source>
</evidence>
<evidence type="ECO:0000250" key="3">
    <source>
        <dbReference type="UniProtKB" id="Q12968"/>
    </source>
</evidence>
<evidence type="ECO:0000255" key="4">
    <source>
        <dbReference type="PROSITE-ProRule" id="PRU00265"/>
    </source>
</evidence>
<evidence type="ECO:0000256" key="5">
    <source>
        <dbReference type="SAM" id="MobiDB-lite"/>
    </source>
</evidence>
<evidence type="ECO:0000269" key="6">
    <source>
    </source>
</evidence>
<evidence type="ECO:0000269" key="7">
    <source>
    </source>
</evidence>
<evidence type="ECO:0000305" key="8"/>
<evidence type="ECO:0000312" key="9">
    <source>
        <dbReference type="Proteomes" id="UP000002494"/>
    </source>
</evidence>
<evidence type="ECO:0000312" key="10">
    <source>
        <dbReference type="RGD" id="1308692"/>
    </source>
</evidence>
<evidence type="ECO:0007744" key="11">
    <source>
    </source>
</evidence>
<accession>A0A0G2JTY4</accession>